<organism>
    <name type="scientific">Invertebrate iridescent virus 3</name>
    <name type="common">IIV-3</name>
    <name type="synonym">Mosquito iridescent virus</name>
    <dbReference type="NCBI Taxonomy" id="345201"/>
    <lineage>
        <taxon>Viruses</taxon>
        <taxon>Varidnaviria</taxon>
        <taxon>Bamfordvirae</taxon>
        <taxon>Nucleocytoviricota</taxon>
        <taxon>Megaviricetes</taxon>
        <taxon>Pimascovirales</taxon>
        <taxon>Iridoviridae</taxon>
        <taxon>Betairidovirinae</taxon>
        <taxon>Chloriridovirus</taxon>
    </lineage>
</organism>
<reference key="1">
    <citation type="journal article" date="2006" name="J. Virol.">
        <title>Genome of invertebrate iridescent virus type 3 (mosquito iridescent virus).</title>
        <authorList>
            <person name="Delhon G."/>
            <person name="Tulman E.R."/>
            <person name="Afonso C.L."/>
            <person name="Lu Z."/>
            <person name="Becnel J.J."/>
            <person name="Moser B.A."/>
            <person name="Kutish G.F."/>
            <person name="Rock D.L."/>
        </authorList>
    </citation>
    <scope>NUCLEOTIDE SEQUENCE [LARGE SCALE GENOMIC DNA]</scope>
</reference>
<name>VF350_IIV3</name>
<evidence type="ECO:0000305" key="1"/>
<keyword id="KW-1185">Reference proteome</keyword>
<organismHost>
    <name type="scientific">Aedes vexans</name>
    <name type="common">Inland floodwater mosquito</name>
    <name type="synonym">Culex vexans</name>
    <dbReference type="NCBI Taxonomy" id="7163"/>
</organismHost>
<organismHost>
    <name type="scientific">Culex territans</name>
    <dbReference type="NCBI Taxonomy" id="42431"/>
</organismHost>
<organismHost>
    <name type="scientific">Culiseta annulata</name>
    <dbReference type="NCBI Taxonomy" id="332058"/>
</organismHost>
<organismHost>
    <name type="scientific">Ochlerotatus sollicitans</name>
    <name type="common">eastern saltmarsh mosquito</name>
    <dbReference type="NCBI Taxonomy" id="310513"/>
</organismHost>
<organismHost>
    <name type="scientific">Ochlerotatus taeniorhynchus</name>
    <name type="common">Black salt marsh mosquito</name>
    <name type="synonym">Aedes taeniorhynchus</name>
    <dbReference type="NCBI Taxonomy" id="329105"/>
</organismHost>
<organismHost>
    <name type="scientific">Psorophora ferox</name>
    <dbReference type="NCBI Taxonomy" id="7183"/>
</organismHost>
<accession>Q197D4</accession>
<feature type="chain" id="PRO_0000377787" description="Uncharacterized protein 026R">
    <location>
        <begin position="1"/>
        <end position="226"/>
    </location>
</feature>
<comment type="similarity">
    <text evidence="1">Belongs to the IIV-6 350L family.</text>
</comment>
<protein>
    <recommendedName>
        <fullName>Uncharacterized protein 026R</fullName>
    </recommendedName>
</protein>
<sequence>MSNGKIYQKIDLSNVDRKKIKDDHESVVVHNEIKHTKELWTFPRRSDWGTSGVRCYWDHHEFDGTPIYCPVSYRPRQVAKISKNEIKPTCRNQSIVDVSTFTIKENIPKSKDVSNLLEKDLIKITDPYYEVDGVFCSPECCVAWIRNEKTKAGGSMYSDSERLLHSMLGLVQKITPANNFRLLKSYGGNLTIDQFRKNNKCIKYEYYGTTVLISHLFEKKINLSSD</sequence>
<proteinExistence type="inferred from homology"/>
<dbReference type="EMBL" id="DQ643392">
    <property type="protein sequence ID" value="ABF82056.1"/>
    <property type="molecule type" value="Genomic_DNA"/>
</dbReference>
<dbReference type="RefSeq" id="YP_654598.1">
    <property type="nucleotide sequence ID" value="NC_008187.1"/>
</dbReference>
<dbReference type="KEGG" id="vg:4156276"/>
<dbReference type="OrthoDB" id="11553at10239"/>
<dbReference type="Proteomes" id="UP000001358">
    <property type="component" value="Genome"/>
</dbReference>
<gene>
    <name type="ORF">IIV3-026R</name>
</gene>